<organism>
    <name type="scientific">Corynebacterium aurimucosum (strain ATCC 700975 / DSM 44827 / CIP 107346 / CN-1)</name>
    <name type="common">Corynebacterium nigricans</name>
    <dbReference type="NCBI Taxonomy" id="548476"/>
    <lineage>
        <taxon>Bacteria</taxon>
        <taxon>Bacillati</taxon>
        <taxon>Actinomycetota</taxon>
        <taxon>Actinomycetes</taxon>
        <taxon>Mycobacteriales</taxon>
        <taxon>Corynebacteriaceae</taxon>
        <taxon>Corynebacterium</taxon>
    </lineage>
</organism>
<name>TRHO_CORA7</name>
<reference key="1">
    <citation type="journal article" date="2010" name="BMC Genomics">
        <title>Complete genome sequence and lifestyle of black-pigmented Corynebacterium aurimucosum ATCC 700975 (formerly C. nigricans CN-1) isolated from a vaginal swab of a woman with spontaneous abortion.</title>
        <authorList>
            <person name="Trost E."/>
            <person name="Gotker S."/>
            <person name="Schneider J."/>
            <person name="Schneiker-Bekel S."/>
            <person name="Szczepanowski R."/>
            <person name="Tilker A."/>
            <person name="Viehoever P."/>
            <person name="Arnold W."/>
            <person name="Bekel T."/>
            <person name="Blom J."/>
            <person name="Gartemann K.H."/>
            <person name="Linke B."/>
            <person name="Goesmann A."/>
            <person name="Puhler A."/>
            <person name="Shukla S.K."/>
            <person name="Tauch A."/>
        </authorList>
    </citation>
    <scope>NUCLEOTIDE SEQUENCE [LARGE SCALE GENOMIC DNA]</scope>
    <source>
        <strain>ATCC 700975 / DSM 44827 / CIP 107346 / CN-1</strain>
    </source>
</reference>
<dbReference type="EC" id="1.14.-.-" evidence="1"/>
<dbReference type="EMBL" id="CP001601">
    <property type="protein sequence ID" value="ACP34039.1"/>
    <property type="molecule type" value="Genomic_DNA"/>
</dbReference>
<dbReference type="RefSeq" id="WP_010187915.1">
    <property type="nucleotide sequence ID" value="NC_012590.1"/>
</dbReference>
<dbReference type="SMR" id="C3PKD8"/>
<dbReference type="STRING" id="548476.cauri_2448"/>
<dbReference type="GeneID" id="31925098"/>
<dbReference type="KEGG" id="car:cauri_2448"/>
<dbReference type="eggNOG" id="COG1054">
    <property type="taxonomic scope" value="Bacteria"/>
</dbReference>
<dbReference type="HOGENOM" id="CLU_038878_1_0_11"/>
<dbReference type="OrthoDB" id="9778326at2"/>
<dbReference type="Proteomes" id="UP000002077">
    <property type="component" value="Chromosome"/>
</dbReference>
<dbReference type="GO" id="GO:0016705">
    <property type="term" value="F:oxidoreductase activity, acting on paired donors, with incorporation or reduction of molecular oxygen"/>
    <property type="evidence" value="ECO:0007669"/>
    <property type="project" value="UniProtKB-UniRule"/>
</dbReference>
<dbReference type="GO" id="GO:0006400">
    <property type="term" value="P:tRNA modification"/>
    <property type="evidence" value="ECO:0007669"/>
    <property type="project" value="UniProtKB-UniRule"/>
</dbReference>
<dbReference type="CDD" id="cd01518">
    <property type="entry name" value="RHOD_YceA"/>
    <property type="match status" value="1"/>
</dbReference>
<dbReference type="Gene3D" id="3.30.70.100">
    <property type="match status" value="1"/>
</dbReference>
<dbReference type="Gene3D" id="3.40.250.10">
    <property type="entry name" value="Rhodanese-like domain"/>
    <property type="match status" value="1"/>
</dbReference>
<dbReference type="HAMAP" id="MF_00469">
    <property type="entry name" value="TrhO"/>
    <property type="match status" value="1"/>
</dbReference>
<dbReference type="InterPro" id="IPR001763">
    <property type="entry name" value="Rhodanese-like_dom"/>
</dbReference>
<dbReference type="InterPro" id="IPR036873">
    <property type="entry name" value="Rhodanese-like_dom_sf"/>
</dbReference>
<dbReference type="InterPro" id="IPR022111">
    <property type="entry name" value="Rhodanese_C"/>
</dbReference>
<dbReference type="InterPro" id="IPR020936">
    <property type="entry name" value="TrhO"/>
</dbReference>
<dbReference type="InterPro" id="IPR040503">
    <property type="entry name" value="TRHO_N"/>
</dbReference>
<dbReference type="NCBIfam" id="NF001134">
    <property type="entry name" value="PRK00142.1-2"/>
    <property type="match status" value="1"/>
</dbReference>
<dbReference type="PANTHER" id="PTHR43268">
    <property type="entry name" value="THIOSULFATE SULFURTRANSFERASE/RHODANESE-LIKE DOMAIN-CONTAINING PROTEIN 2"/>
    <property type="match status" value="1"/>
</dbReference>
<dbReference type="PANTHER" id="PTHR43268:SF6">
    <property type="entry name" value="THIOSULFATE SULFURTRANSFERASE_RHODANESE-LIKE DOMAIN-CONTAINING PROTEIN 2"/>
    <property type="match status" value="1"/>
</dbReference>
<dbReference type="Pfam" id="PF00581">
    <property type="entry name" value="Rhodanese"/>
    <property type="match status" value="1"/>
</dbReference>
<dbReference type="Pfam" id="PF12368">
    <property type="entry name" value="Rhodanese_C"/>
    <property type="match status" value="1"/>
</dbReference>
<dbReference type="Pfam" id="PF17773">
    <property type="entry name" value="UPF0176_N"/>
    <property type="match status" value="1"/>
</dbReference>
<dbReference type="SMART" id="SM00450">
    <property type="entry name" value="RHOD"/>
    <property type="match status" value="1"/>
</dbReference>
<dbReference type="SUPFAM" id="SSF52821">
    <property type="entry name" value="Rhodanese/Cell cycle control phosphatase"/>
    <property type="match status" value="1"/>
</dbReference>
<dbReference type="PROSITE" id="PS50206">
    <property type="entry name" value="RHODANESE_3"/>
    <property type="match status" value="1"/>
</dbReference>
<accession>C3PKD8</accession>
<evidence type="ECO:0000255" key="1">
    <source>
        <dbReference type="HAMAP-Rule" id="MF_00469"/>
    </source>
</evidence>
<feature type="chain" id="PRO_1000135467" description="tRNA uridine(34) hydroxylase">
    <location>
        <begin position="1"/>
        <end position="309"/>
    </location>
</feature>
<feature type="domain" description="Rhodanese" evidence="1">
    <location>
        <begin position="130"/>
        <end position="225"/>
    </location>
</feature>
<feature type="active site" description="Cysteine persulfide intermediate" evidence="1">
    <location>
        <position position="185"/>
    </location>
</feature>
<sequence>MTIGKILLYYCFTPIEDPTAIMLWQRSLCEKLGLKGRILISEHGINGTVGGDMDACKRYVRETREYPGFKKMEFKWSEGGAEDFPRLSVKVRDEIVAFGAPGELKVDENGVIGGGVHLKPEEVNKLVEERGEEVVFFDGRNAMEAEIGKFKNAVVPDVRTTHDFIAELESGKYDWMKDKPVVSYCTGGIRCEILSALMKNRGFNEVYQIDGGIVRYGEKYGNDGLWEGSMYVFDKRMHHEFGQGLEDPGFIQLGHCVHCGKGTNTFHNCINEDTCRKQVLICDDCIQHVETQHCGRPDCAEVAASQAQA</sequence>
<keyword id="KW-0560">Oxidoreductase</keyword>
<keyword id="KW-1185">Reference proteome</keyword>
<keyword id="KW-0819">tRNA processing</keyword>
<comment type="function">
    <text evidence="1">Catalyzes oxygen-dependent 5-hydroxyuridine (ho5U) modification at position 34 in tRNAs.</text>
</comment>
<comment type="catalytic activity">
    <reaction evidence="1">
        <text>uridine(34) in tRNA + AH2 + O2 = 5-hydroxyuridine(34) in tRNA + A + H2O</text>
        <dbReference type="Rhea" id="RHEA:64224"/>
        <dbReference type="Rhea" id="RHEA-COMP:11727"/>
        <dbReference type="Rhea" id="RHEA-COMP:13381"/>
        <dbReference type="ChEBI" id="CHEBI:13193"/>
        <dbReference type="ChEBI" id="CHEBI:15377"/>
        <dbReference type="ChEBI" id="CHEBI:15379"/>
        <dbReference type="ChEBI" id="CHEBI:17499"/>
        <dbReference type="ChEBI" id="CHEBI:65315"/>
        <dbReference type="ChEBI" id="CHEBI:136877"/>
    </reaction>
</comment>
<comment type="similarity">
    <text evidence="1">Belongs to the TrhO family.</text>
</comment>
<gene>
    <name evidence="1" type="primary">trhO</name>
    <name type="ordered locus">cauri_2448</name>
</gene>
<proteinExistence type="inferred from homology"/>
<protein>
    <recommendedName>
        <fullName evidence="1">tRNA uridine(34) hydroxylase</fullName>
        <ecNumber evidence="1">1.14.-.-</ecNumber>
    </recommendedName>
    <alternativeName>
        <fullName evidence="1">tRNA hydroxylation protein O</fullName>
    </alternativeName>
</protein>